<reference key="1">
    <citation type="journal article" date="2020" name="Nat. Commun.">
        <title>A comparative genomics study of 23 Aspergillus species from section Flavi.</title>
        <authorList>
            <person name="Kjaerboelling I."/>
            <person name="Vesth T."/>
            <person name="Frisvad J.C."/>
            <person name="Nybo J.L."/>
            <person name="Theobald S."/>
            <person name="Kildgaard S."/>
            <person name="Petersen T.I."/>
            <person name="Kuo A."/>
            <person name="Sato A."/>
            <person name="Lyhne E.K."/>
            <person name="Kogle M.E."/>
            <person name="Wiebenga A."/>
            <person name="Kun R.S."/>
            <person name="Lubbers R.J.M."/>
            <person name="Maekelae M.R."/>
            <person name="Barry K."/>
            <person name="Chovatia M."/>
            <person name="Clum A."/>
            <person name="Daum C."/>
            <person name="Haridas S."/>
            <person name="He G."/>
            <person name="LaButti K."/>
            <person name="Lipzen A."/>
            <person name="Mondo S."/>
            <person name="Pangilinan J."/>
            <person name="Riley R."/>
            <person name="Salamov A."/>
            <person name="Simmons B.A."/>
            <person name="Magnuson J.K."/>
            <person name="Henrissat B."/>
            <person name="Mortensen U.H."/>
            <person name="Larsen T.O."/>
            <person name="de Vries R.P."/>
            <person name="Grigoriev I.V."/>
            <person name="Machida M."/>
            <person name="Baker S.E."/>
            <person name="Andersen M.R."/>
        </authorList>
    </citation>
    <scope>NUCLEOTIDE SEQUENCE [LARGE SCALE GENOMIC DNA]</scope>
    <source>
        <strain>CBS 117626</strain>
    </source>
</reference>
<reference key="2">
    <citation type="journal article" date="2018" name="Front. Bioeng. Biotechnol.">
        <title>Analysis of the Transcriptome in Aspergillus tamarii During Enzymatic Degradation of Sugarcane Bagasse.</title>
        <authorList>
            <person name="Midorikawa G.E.O."/>
            <person name="Correa C.L."/>
            <person name="Noronha E.F."/>
            <person name="Filho E.X.F."/>
            <person name="Togawa R.C."/>
            <person name="Costa M.M.D.C."/>
            <person name="Silva-Junior O.B."/>
            <person name="Grynberg P."/>
            <person name="Miller R.N.G."/>
        </authorList>
    </citation>
    <scope>INDUCTION</scope>
</reference>
<reference key="3">
    <citation type="journal article" date="2020" name="PLoS ONE">
        <title>Characterization of two family AA9 LPMOs from Aspergillus tamarii with distinct activities on xyloglucan reveals structural differences linked to cleavage specificity.</title>
        <authorList>
            <person name="Monclaro A.V."/>
            <person name="Petrovic D.M."/>
            <person name="Alves G.S.C."/>
            <person name="Costa M.M.C."/>
            <person name="Midorikawa G.E.O."/>
            <person name="Miller R.N.G."/>
            <person name="Filho E.X.F."/>
            <person name="Eijsink V.G.H."/>
            <person name="Varnai A."/>
        </authorList>
    </citation>
    <scope>FUNCTION</scope>
    <scope>CATALYTIC ACTIVITY</scope>
</reference>
<comment type="function">
    <text evidence="7">Lytic polysaccharide monooxygenase (LPMO) that depolymerizes crystalline and amorphous polysaccharides via the oxidation of scissile alpha- or beta-(1-4)-glycosidic bonds, yielding C1 and C4 oxidation products (PubMed:32640001). Catalysis by LPMOs requires the reduction of the active-site copper from Cu(II) to Cu(I) by a reducing agent and H(2)O(2) or O(2) as a cosubstrate (PubMed:32640001). In addition to cellulose, also cleaves the beta-(1!4)-glucan backbone of tamarind xyloglucan, irrespective of substitutions which contrasts with AA9A xyloglucan cleavage activity (PubMed:32640001).</text>
</comment>
<comment type="catalytic activity">
    <reaction evidence="7">
        <text>[(1-&gt;4)-beta-D-glucosyl]n+m + reduced acceptor + O2 = 4-dehydro-beta-D-glucosyl-[(1-&gt;4)-beta-D-glucosyl]n-1 + [(1-&gt;4)-beta-D-glucosyl]m + acceptor + H2O.</text>
        <dbReference type="EC" id="1.14.99.56"/>
    </reaction>
</comment>
<comment type="cofactor">
    <cofactor evidence="2">
        <name>Cu(2+)</name>
        <dbReference type="ChEBI" id="CHEBI:29036"/>
    </cofactor>
    <text evidence="2">Binds 1 copper ion per subunit.</text>
</comment>
<comment type="subcellular location">
    <subcellularLocation>
        <location evidence="10">Secreted</location>
    </subcellularLocation>
</comment>
<comment type="induction">
    <text evidence="6">Expression is up-regulated on steam-exploded bagasse as carbon source compared to glucose.</text>
</comment>
<comment type="biotechnology">
    <text evidence="2">Lignocellulose is the most abundant polymeric composite on Earth and is a recalcitrant but promising renewable substrate for industrial biotechnology applications. Together with cellobiose dehydrogenases (CDHs) an enzymatic system capable of oxidative cellulose cleavage is formed, which increases the efficiency of cellulases and put LPMOs at focus of biofuel research.</text>
</comment>
<comment type="similarity">
    <text evidence="9">Belongs to the polysaccharide monooxygenase AA9 family.</text>
</comment>
<evidence type="ECO:0000250" key="1">
    <source>
        <dbReference type="UniProtKB" id="Q1K8B6"/>
    </source>
</evidence>
<evidence type="ECO:0000250" key="2">
    <source>
        <dbReference type="UniProtKB" id="Q4WP32"/>
    </source>
</evidence>
<evidence type="ECO:0000255" key="3"/>
<evidence type="ECO:0000255" key="4">
    <source>
        <dbReference type="PROSITE-ProRule" id="PRU00498"/>
    </source>
</evidence>
<evidence type="ECO:0000256" key="5">
    <source>
        <dbReference type="SAM" id="MobiDB-lite"/>
    </source>
</evidence>
<evidence type="ECO:0000269" key="6">
    <source>
    </source>
</evidence>
<evidence type="ECO:0000269" key="7">
    <source>
    </source>
</evidence>
<evidence type="ECO:0000303" key="8">
    <source>
    </source>
</evidence>
<evidence type="ECO:0000305" key="9"/>
<evidence type="ECO:0000305" key="10">
    <source>
    </source>
</evidence>
<keyword id="KW-0119">Carbohydrate metabolism</keyword>
<keyword id="KW-0136">Cellulose degradation</keyword>
<keyword id="KW-0186">Copper</keyword>
<keyword id="KW-1015">Disulfide bond</keyword>
<keyword id="KW-0325">Glycoprotein</keyword>
<keyword id="KW-0479">Metal-binding</keyword>
<keyword id="KW-0503">Monooxygenase</keyword>
<keyword id="KW-0560">Oxidoreductase</keyword>
<keyword id="KW-0624">Polysaccharide degradation</keyword>
<keyword id="KW-1185">Reference proteome</keyword>
<keyword id="KW-0964">Secreted</keyword>
<keyword id="KW-0732">Signal</keyword>
<accession>A0A5N6UX39</accession>
<gene>
    <name type="ORF">BDV40DRAFT_140265</name>
</gene>
<organism>
    <name type="scientific">Aspergillus tamarii</name>
    <dbReference type="NCBI Taxonomy" id="41984"/>
    <lineage>
        <taxon>Eukaryota</taxon>
        <taxon>Fungi</taxon>
        <taxon>Dikarya</taxon>
        <taxon>Ascomycota</taxon>
        <taxon>Pezizomycotina</taxon>
        <taxon>Eurotiomycetes</taxon>
        <taxon>Eurotiomycetidae</taxon>
        <taxon>Eurotiales</taxon>
        <taxon>Aspergillaceae</taxon>
        <taxon>Aspergillus</taxon>
        <taxon>Aspergillus subgen. Circumdati</taxon>
    </lineage>
</organism>
<sequence length="371" mass="37874">MSIAKIAGVVLGSAALVAGHGYVSGAVVDGQYYSGYDMSYHYMSDPPKVIGWSTDATDLGFVDGSSYADADIICHKNAKNGAISAEIAAGKQVELQWTDWPESHKGPVITYLANCNGDCATVDKTQLEFFKIDEKGLISGSDNTWASDNLISSNNSWTVTIPSSIAAGNYVMRHEIIALHSAGNKDGAQNYPQCLNFKVTGGGSDKPEGTLGTALYKDTDPGILVNIYQTLSSYTIPGPALYSGSSSGSSSGSSGSSSAAPSATASASASATAAPVQTSTATAYQTSTAVASVTVTGSSPAQTHVQATSSSAAASTPTASSGASSGSGSSSSSSDLTDYFNSLSADELLNVIKQTLSWLVTDKIHARDISA</sequence>
<dbReference type="EC" id="1.14.99.56" evidence="7"/>
<dbReference type="EMBL" id="ML738619">
    <property type="protein sequence ID" value="KAE8163242.1"/>
    <property type="molecule type" value="Genomic_DNA"/>
</dbReference>
<dbReference type="SMR" id="A0A5N6UX39"/>
<dbReference type="OrthoDB" id="4849160at2759"/>
<dbReference type="Proteomes" id="UP000326950">
    <property type="component" value="Unassembled WGS sequence"/>
</dbReference>
<dbReference type="GO" id="GO:0005576">
    <property type="term" value="C:extracellular region"/>
    <property type="evidence" value="ECO:0007669"/>
    <property type="project" value="UniProtKB-SubCell"/>
</dbReference>
<dbReference type="GO" id="GO:0046872">
    <property type="term" value="F:metal ion binding"/>
    <property type="evidence" value="ECO:0007669"/>
    <property type="project" value="UniProtKB-KW"/>
</dbReference>
<dbReference type="GO" id="GO:0004497">
    <property type="term" value="F:monooxygenase activity"/>
    <property type="evidence" value="ECO:0007669"/>
    <property type="project" value="UniProtKB-KW"/>
</dbReference>
<dbReference type="GO" id="GO:0030245">
    <property type="term" value="P:cellulose catabolic process"/>
    <property type="evidence" value="ECO:0007669"/>
    <property type="project" value="UniProtKB-KW"/>
</dbReference>
<dbReference type="CDD" id="cd21175">
    <property type="entry name" value="LPMO_AA9"/>
    <property type="match status" value="1"/>
</dbReference>
<dbReference type="Gene3D" id="2.70.50.70">
    <property type="match status" value="1"/>
</dbReference>
<dbReference type="InterPro" id="IPR049892">
    <property type="entry name" value="AA9"/>
</dbReference>
<dbReference type="InterPro" id="IPR005103">
    <property type="entry name" value="AA9_LPMO"/>
</dbReference>
<dbReference type="PANTHER" id="PTHR33353:SF34">
    <property type="entry name" value="ENDO-BETA-1,4-GLUCANASE D"/>
    <property type="match status" value="1"/>
</dbReference>
<dbReference type="PANTHER" id="PTHR33353">
    <property type="entry name" value="PUTATIVE (AFU_ORTHOLOGUE AFUA_1G12560)-RELATED"/>
    <property type="match status" value="1"/>
</dbReference>
<dbReference type="Pfam" id="PF03443">
    <property type="entry name" value="AA9"/>
    <property type="match status" value="1"/>
</dbReference>
<feature type="signal peptide" evidence="3">
    <location>
        <begin position="1"/>
        <end position="25"/>
    </location>
</feature>
<feature type="chain" id="PRO_5024840239" description="AA9 family lytic polysaccharide monooxygenase B">
    <location>
        <begin position="26"/>
        <end position="371"/>
    </location>
</feature>
<feature type="region of interest" description="Disordered" evidence="5">
    <location>
        <begin position="304"/>
        <end position="332"/>
    </location>
</feature>
<feature type="compositionally biased region" description="Low complexity" evidence="5">
    <location>
        <begin position="307"/>
        <end position="332"/>
    </location>
</feature>
<feature type="binding site" evidence="2">
    <location>
        <position position="20"/>
    </location>
    <ligand>
        <name>Cu(2+)</name>
        <dbReference type="ChEBI" id="CHEBI:29036"/>
        <note>catalytic</note>
    </ligand>
</feature>
<feature type="binding site" evidence="2">
    <location>
        <position position="104"/>
    </location>
    <ligand>
        <name>Cu(2+)</name>
        <dbReference type="ChEBI" id="CHEBI:29036"/>
        <note>catalytic</note>
    </ligand>
</feature>
<feature type="binding site" evidence="1">
    <location>
        <position position="180"/>
    </location>
    <ligand>
        <name>O2</name>
        <dbReference type="ChEBI" id="CHEBI:15379"/>
    </ligand>
</feature>
<feature type="binding site" evidence="1">
    <location>
        <position position="189"/>
    </location>
    <ligand>
        <name>O2</name>
        <dbReference type="ChEBI" id="CHEBI:15379"/>
    </ligand>
</feature>
<feature type="binding site" evidence="2">
    <location>
        <position position="191"/>
    </location>
    <ligand>
        <name>Cu(2+)</name>
        <dbReference type="ChEBI" id="CHEBI:29036"/>
        <note>catalytic</note>
    </ligand>
</feature>
<feature type="glycosylation site" description="N-linked (GlcNAc...) asparagine" evidence="4">
    <location>
        <position position="154"/>
    </location>
</feature>
<feature type="disulfide bond" evidence="2">
    <location>
        <begin position="74"/>
        <end position="194"/>
    </location>
</feature>
<feature type="disulfide bond" evidence="2">
    <location>
        <begin position="115"/>
        <end position="119"/>
    </location>
</feature>
<proteinExistence type="evidence at protein level"/>
<protein>
    <recommendedName>
        <fullName evidence="8">AA9 family lytic polysaccharide monooxygenase B</fullName>
        <shortName evidence="8">AtAA9B</shortName>
        <ecNumber evidence="7">1.14.99.56</ecNumber>
    </recommendedName>
    <alternativeName>
        <fullName evidence="9">Cellulase AA9B</fullName>
    </alternativeName>
    <alternativeName>
        <fullName evidence="9">Endo-beta-1,4-glucanase AA9B</fullName>
        <shortName evidence="9">Endoglucanase AA9B</shortName>
    </alternativeName>
    <alternativeName>
        <fullName evidence="9">Glycosyl hydrolase 61 family protein AA9B</fullName>
    </alternativeName>
</protein>
<name>LP9B_ASPTM</name>